<dbReference type="EMBL" id="AL021889">
    <property type="protein sequence ID" value="CAA17134.1"/>
    <property type="status" value="ALT_SEQ"/>
    <property type="molecule type" value="Genomic_DNA"/>
</dbReference>
<dbReference type="EMBL" id="AL161547">
    <property type="protein sequence ID" value="CAB78793.1"/>
    <property type="status" value="ALT_SEQ"/>
    <property type="molecule type" value="Genomic_DNA"/>
</dbReference>
<dbReference type="EMBL" id="CP002687">
    <property type="status" value="NOT_ANNOTATED_CDS"/>
    <property type="molecule type" value="Genomic_DNA"/>
</dbReference>
<dbReference type="PIR" id="T05077">
    <property type="entry name" value="T05077"/>
</dbReference>
<dbReference type="SMR" id="P0C043"/>
<dbReference type="GlyGen" id="P0C043">
    <property type="glycosylation" value="1 site"/>
</dbReference>
<dbReference type="Araport" id="AT4G17915"/>
<dbReference type="TAIR" id="AT4G17915"/>
<dbReference type="InParanoid" id="P0C043"/>
<dbReference type="PRO" id="PR:P0C043"/>
<dbReference type="Proteomes" id="UP000006548">
    <property type="component" value="Chromosome 4"/>
</dbReference>
<dbReference type="ExpressionAtlas" id="P0C043">
    <property type="expression patterns" value="baseline and differential"/>
</dbReference>
<dbReference type="GO" id="GO:0003729">
    <property type="term" value="F:mRNA binding"/>
    <property type="evidence" value="ECO:0000318"/>
    <property type="project" value="GO_Central"/>
</dbReference>
<dbReference type="Gene3D" id="1.25.40.10">
    <property type="entry name" value="Tetratricopeptide repeat domain"/>
    <property type="match status" value="3"/>
</dbReference>
<dbReference type="InterPro" id="IPR002885">
    <property type="entry name" value="Pentatricopeptide_rpt"/>
</dbReference>
<dbReference type="InterPro" id="IPR050872">
    <property type="entry name" value="PPR_P_subfamily"/>
</dbReference>
<dbReference type="InterPro" id="IPR011990">
    <property type="entry name" value="TPR-like_helical_dom_sf"/>
</dbReference>
<dbReference type="NCBIfam" id="TIGR00756">
    <property type="entry name" value="PPR"/>
    <property type="match status" value="8"/>
</dbReference>
<dbReference type="PANTHER" id="PTHR46128">
    <property type="entry name" value="MITOCHONDRIAL GROUP I INTRON SPLICING FACTOR CCM1"/>
    <property type="match status" value="1"/>
</dbReference>
<dbReference type="PANTHER" id="PTHR46128:SF307">
    <property type="entry name" value="PENTACOTRIPEPTIDE-REPEAT REGION OF PRORP DOMAIN-CONTAINING PROTEIN"/>
    <property type="match status" value="1"/>
</dbReference>
<dbReference type="Pfam" id="PF01535">
    <property type="entry name" value="PPR"/>
    <property type="match status" value="2"/>
</dbReference>
<dbReference type="Pfam" id="PF13041">
    <property type="entry name" value="PPR_2"/>
    <property type="match status" value="5"/>
</dbReference>
<dbReference type="SUPFAM" id="SSF48452">
    <property type="entry name" value="TPR-like"/>
    <property type="match status" value="1"/>
</dbReference>
<dbReference type="PROSITE" id="PS51375">
    <property type="entry name" value="PPR"/>
    <property type="match status" value="12"/>
</dbReference>
<sequence>MVRGLVNFTGLSTRLLNICVDSLCKFRKLEKAESLIIDGIRLGVDPDVVTYNTLISGYCRFVGIEEAYAVTRRMRDAGIRPDVATYNSLIAGAARRLMLDHVLYLFDEMLEWGIYPDLWSYNTLMCCYFKLGKHEEAFRVLYKDLQLAGLNPGPDTYNVLLDALCKCGYIDNALELFKEMQSRFKPELMTYNILINGLCKSRRVGTAKWMLTELKKSGYTPNAVTYTTILKLYFKTRRIRRGLQLFLEMKREGYTYDGYAYFAVVSALIKTGRTKEAYEYMQELVRKGRRHDIVSYNTLLNLYFKDGNLDAVDDLLGEIERRGMKADEYTHTIIVNGLLRTGQTRRAEEHFVSMGEMGIGLNLVTCNCLVDGLCKAGHVDRAMRYFESMEVKDEYTYTSVVHNLCKDMRFVCASKLLLSCYNKGIKIPTSARRAVLSGLRMSGCYGEARKAKAEMKLTLVGNS</sequence>
<organism>
    <name type="scientific">Arabidopsis thaliana</name>
    <name type="common">Mouse-ear cress</name>
    <dbReference type="NCBI Taxonomy" id="3702"/>
    <lineage>
        <taxon>Eukaryota</taxon>
        <taxon>Viridiplantae</taxon>
        <taxon>Streptophyta</taxon>
        <taxon>Embryophyta</taxon>
        <taxon>Tracheophyta</taxon>
        <taxon>Spermatophyta</taxon>
        <taxon>Magnoliopsida</taxon>
        <taxon>eudicotyledons</taxon>
        <taxon>Gunneridae</taxon>
        <taxon>Pentapetalae</taxon>
        <taxon>rosids</taxon>
        <taxon>malvids</taxon>
        <taxon>Brassicales</taxon>
        <taxon>Brassicaceae</taxon>
        <taxon>Camelineae</taxon>
        <taxon>Arabidopsis</taxon>
    </lineage>
</organism>
<reference key="1">
    <citation type="journal article" date="1999" name="Nature">
        <title>Sequence and analysis of chromosome 4 of the plant Arabidopsis thaliana.</title>
        <authorList>
            <person name="Mayer K.F.X."/>
            <person name="Schueller C."/>
            <person name="Wambutt R."/>
            <person name="Murphy G."/>
            <person name="Volckaert G."/>
            <person name="Pohl T."/>
            <person name="Duesterhoeft A."/>
            <person name="Stiekema W."/>
            <person name="Entian K.-D."/>
            <person name="Terryn N."/>
            <person name="Harris B."/>
            <person name="Ansorge W."/>
            <person name="Brandt P."/>
            <person name="Grivell L.A."/>
            <person name="Rieger M."/>
            <person name="Weichselgartner M."/>
            <person name="de Simone V."/>
            <person name="Obermaier B."/>
            <person name="Mache R."/>
            <person name="Mueller M."/>
            <person name="Kreis M."/>
            <person name="Delseny M."/>
            <person name="Puigdomenech P."/>
            <person name="Watson M."/>
            <person name="Schmidtheini T."/>
            <person name="Reichert B."/>
            <person name="Portetelle D."/>
            <person name="Perez-Alonso M."/>
            <person name="Boutry M."/>
            <person name="Bancroft I."/>
            <person name="Vos P."/>
            <person name="Hoheisel J."/>
            <person name="Zimmermann W."/>
            <person name="Wedler H."/>
            <person name="Ridley P."/>
            <person name="Langham S.-A."/>
            <person name="McCullagh B."/>
            <person name="Bilham L."/>
            <person name="Robben J."/>
            <person name="van der Schueren J."/>
            <person name="Grymonprez B."/>
            <person name="Chuang Y.-J."/>
            <person name="Vandenbussche F."/>
            <person name="Braeken M."/>
            <person name="Weltjens I."/>
            <person name="Voet M."/>
            <person name="Bastiaens I."/>
            <person name="Aert R."/>
            <person name="Defoor E."/>
            <person name="Weitzenegger T."/>
            <person name="Bothe G."/>
            <person name="Ramsperger U."/>
            <person name="Hilbert H."/>
            <person name="Braun M."/>
            <person name="Holzer E."/>
            <person name="Brandt A."/>
            <person name="Peters S."/>
            <person name="van Staveren M."/>
            <person name="Dirkse W."/>
            <person name="Mooijman P."/>
            <person name="Klein Lankhorst R."/>
            <person name="Rose M."/>
            <person name="Hauf J."/>
            <person name="Koetter P."/>
            <person name="Berneiser S."/>
            <person name="Hempel S."/>
            <person name="Feldpausch M."/>
            <person name="Lamberth S."/>
            <person name="Van den Daele H."/>
            <person name="De Keyser A."/>
            <person name="Buysshaert C."/>
            <person name="Gielen J."/>
            <person name="Villarroel R."/>
            <person name="De Clercq R."/>
            <person name="van Montagu M."/>
            <person name="Rogers J."/>
            <person name="Cronin A."/>
            <person name="Quail M.A."/>
            <person name="Bray-Allen S."/>
            <person name="Clark L."/>
            <person name="Doggett J."/>
            <person name="Hall S."/>
            <person name="Kay M."/>
            <person name="Lennard N."/>
            <person name="McLay K."/>
            <person name="Mayes R."/>
            <person name="Pettett A."/>
            <person name="Rajandream M.A."/>
            <person name="Lyne M."/>
            <person name="Benes V."/>
            <person name="Rechmann S."/>
            <person name="Borkova D."/>
            <person name="Bloecker H."/>
            <person name="Scharfe M."/>
            <person name="Grimm M."/>
            <person name="Loehnert T.-H."/>
            <person name="Dose S."/>
            <person name="de Haan M."/>
            <person name="Maarse A.C."/>
            <person name="Schaefer M."/>
            <person name="Mueller-Auer S."/>
            <person name="Gabel C."/>
            <person name="Fuchs M."/>
            <person name="Fartmann B."/>
            <person name="Granderath K."/>
            <person name="Dauner D."/>
            <person name="Herzl A."/>
            <person name="Neumann S."/>
            <person name="Argiriou A."/>
            <person name="Vitale D."/>
            <person name="Liguori R."/>
            <person name="Piravandi E."/>
            <person name="Massenet O."/>
            <person name="Quigley F."/>
            <person name="Clabauld G."/>
            <person name="Muendlein A."/>
            <person name="Felber R."/>
            <person name="Schnabl S."/>
            <person name="Hiller R."/>
            <person name="Schmidt W."/>
            <person name="Lecharny A."/>
            <person name="Aubourg S."/>
            <person name="Chefdor F."/>
            <person name="Cooke R."/>
            <person name="Berger C."/>
            <person name="Monfort A."/>
            <person name="Casacuberta E."/>
            <person name="Gibbons T."/>
            <person name="Weber N."/>
            <person name="Vandenbol M."/>
            <person name="Bargues M."/>
            <person name="Terol J."/>
            <person name="Torres A."/>
            <person name="Perez-Perez A."/>
            <person name="Purnelle B."/>
            <person name="Bent E."/>
            <person name="Johnson S."/>
            <person name="Tacon D."/>
            <person name="Jesse T."/>
            <person name="Heijnen L."/>
            <person name="Schwarz S."/>
            <person name="Scholler P."/>
            <person name="Heber S."/>
            <person name="Francs P."/>
            <person name="Bielke C."/>
            <person name="Frishman D."/>
            <person name="Haase D."/>
            <person name="Lemcke K."/>
            <person name="Mewes H.-W."/>
            <person name="Stocker S."/>
            <person name="Zaccaria P."/>
            <person name="Bevan M."/>
            <person name="Wilson R.K."/>
            <person name="de la Bastide M."/>
            <person name="Habermann K."/>
            <person name="Parnell L."/>
            <person name="Dedhia N."/>
            <person name="Gnoj L."/>
            <person name="Schutz K."/>
            <person name="Huang E."/>
            <person name="Spiegel L."/>
            <person name="Sekhon M."/>
            <person name="Murray J."/>
            <person name="Sheet P."/>
            <person name="Cordes M."/>
            <person name="Abu-Threideh J."/>
            <person name="Stoneking T."/>
            <person name="Kalicki J."/>
            <person name="Graves T."/>
            <person name="Harmon G."/>
            <person name="Edwards J."/>
            <person name="Latreille P."/>
            <person name="Courtney L."/>
            <person name="Cloud J."/>
            <person name="Abbott A."/>
            <person name="Scott K."/>
            <person name="Johnson D."/>
            <person name="Minx P."/>
            <person name="Bentley D."/>
            <person name="Fulton B."/>
            <person name="Miller N."/>
            <person name="Greco T."/>
            <person name="Kemp K."/>
            <person name="Kramer J."/>
            <person name="Fulton L."/>
            <person name="Mardis E."/>
            <person name="Dante M."/>
            <person name="Pepin K."/>
            <person name="Hillier L.W."/>
            <person name="Nelson J."/>
            <person name="Spieth J."/>
            <person name="Ryan E."/>
            <person name="Andrews S."/>
            <person name="Geisel C."/>
            <person name="Layman D."/>
            <person name="Du H."/>
            <person name="Ali J."/>
            <person name="Berghoff A."/>
            <person name="Jones K."/>
            <person name="Drone K."/>
            <person name="Cotton M."/>
            <person name="Joshu C."/>
            <person name="Antonoiu B."/>
            <person name="Zidanic M."/>
            <person name="Strong C."/>
            <person name="Sun H."/>
            <person name="Lamar B."/>
            <person name="Yordan C."/>
            <person name="Ma P."/>
            <person name="Zhong J."/>
            <person name="Preston R."/>
            <person name="Vil D."/>
            <person name="Shekher M."/>
            <person name="Matero A."/>
            <person name="Shah R."/>
            <person name="Swaby I.K."/>
            <person name="O'Shaughnessy A."/>
            <person name="Rodriguez M."/>
            <person name="Hoffman J."/>
            <person name="Till S."/>
            <person name="Granat S."/>
            <person name="Shohdy N."/>
            <person name="Hasegawa A."/>
            <person name="Hameed A."/>
            <person name="Lodhi M."/>
            <person name="Johnson A."/>
            <person name="Chen E."/>
            <person name="Marra M.A."/>
            <person name="Martienssen R."/>
            <person name="McCombie W.R."/>
        </authorList>
    </citation>
    <scope>NUCLEOTIDE SEQUENCE [LARGE SCALE GENOMIC DNA]</scope>
    <source>
        <strain>cv. Columbia</strain>
    </source>
</reference>
<reference key="2">
    <citation type="journal article" date="2017" name="Plant J.">
        <title>Araport11: a complete reannotation of the Arabidopsis thaliana reference genome.</title>
        <authorList>
            <person name="Cheng C.Y."/>
            <person name="Krishnakumar V."/>
            <person name="Chan A.P."/>
            <person name="Thibaud-Nissen F."/>
            <person name="Schobel S."/>
            <person name="Town C.D."/>
        </authorList>
    </citation>
    <scope>GENOME REANNOTATION</scope>
    <source>
        <strain>cv. Columbia</strain>
    </source>
</reference>
<reference key="3">
    <citation type="journal article" date="2004" name="Plant Cell">
        <title>Genome-wide analysis of Arabidopsis pentatricopeptide repeat proteins reveals their essential role in organelle biogenesis.</title>
        <authorList>
            <person name="Lurin C."/>
            <person name="Andres C."/>
            <person name="Aubourg S."/>
            <person name="Bellaoui M."/>
            <person name="Bitton F."/>
            <person name="Bruyere C."/>
            <person name="Caboche M."/>
            <person name="Debast C."/>
            <person name="Gualberto J."/>
            <person name="Hoffmann B."/>
            <person name="Lecharny A."/>
            <person name="Le Ret M."/>
            <person name="Martin-Magniette M.-L."/>
            <person name="Mireau H."/>
            <person name="Peeters N."/>
            <person name="Renou J.-P."/>
            <person name="Szurek B."/>
            <person name="Taconnat L."/>
            <person name="Small I."/>
        </authorList>
    </citation>
    <scope>GENE FAMILY</scope>
</reference>
<comment type="similarity">
    <text evidence="1">Belongs to the PPR family. P subfamily.</text>
</comment>
<comment type="sequence caution" evidence="1">
    <conflict type="erroneous gene model prediction">
        <sequence resource="EMBL-CDS" id="CAA17134"/>
    </conflict>
    <text>The predicted gene has been split into 3 genes: At4g17905, At4g17910 and At4g17915.</text>
</comment>
<comment type="sequence caution" evidence="1">
    <conflict type="erroneous gene model prediction">
        <sequence resource="EMBL-CDS" id="CAB78793"/>
    </conflict>
    <text>The predicted gene has been split into 3 genes: At4g17905, At4g17910 and At4g17915.</text>
</comment>
<comment type="online information" name="Pentatricopeptide repeat proteins">
    <link uri="https://ppr.plantenergy.uwa.edu.au"/>
</comment>
<keyword id="KW-1185">Reference proteome</keyword>
<keyword id="KW-0677">Repeat</keyword>
<protein>
    <recommendedName>
        <fullName>Putative pentatricopeptide repeat-containing protein At4g17915</fullName>
    </recommendedName>
</protein>
<proteinExistence type="inferred from homology"/>
<feature type="chain" id="PRO_0000220611" description="Putative pentatricopeptide repeat-containing protein At4g17915">
    <location>
        <begin position="1"/>
        <end position="463"/>
    </location>
</feature>
<feature type="repeat" description="PPR 1">
    <location>
        <begin position="12"/>
        <end position="46"/>
    </location>
</feature>
<feature type="repeat" description="PPR 2">
    <location>
        <begin position="47"/>
        <end position="81"/>
    </location>
</feature>
<feature type="repeat" description="PPR 3">
    <location>
        <begin position="82"/>
        <end position="116"/>
    </location>
</feature>
<feature type="repeat" description="PPR 4">
    <location>
        <begin position="117"/>
        <end position="152"/>
    </location>
</feature>
<feature type="repeat" description="PPR 5">
    <location>
        <begin position="153"/>
        <end position="186"/>
    </location>
</feature>
<feature type="repeat" description="PPR 6">
    <location>
        <begin position="187"/>
        <end position="221"/>
    </location>
</feature>
<feature type="repeat" description="PPR 7">
    <location>
        <begin position="222"/>
        <end position="256"/>
    </location>
</feature>
<feature type="repeat" description="PPR 8">
    <location>
        <begin position="257"/>
        <end position="291"/>
    </location>
</feature>
<feature type="repeat" description="PPR 9">
    <location>
        <begin position="292"/>
        <end position="326"/>
    </location>
</feature>
<feature type="repeat" description="PPR 10">
    <location>
        <begin position="327"/>
        <end position="361"/>
    </location>
</feature>
<feature type="repeat" description="PPR 11">
    <location>
        <begin position="362"/>
        <end position="392"/>
    </location>
</feature>
<feature type="repeat" description="PPR 12">
    <location>
        <begin position="393"/>
        <end position="427"/>
    </location>
</feature>
<evidence type="ECO:0000305" key="1"/>
<gene>
    <name type="ordered locus">At4g17915</name>
    <name type="ORF">T6K21.90</name>
</gene>
<name>PP318_ARATH</name>
<accession>P0C043</accession>
<accession>O49690</accession>